<reference key="1">
    <citation type="submission" date="2008-02" db="EMBL/GenBank/DDBJ databases">
        <title>Complete sequence of Haemophilus somnus 2336.</title>
        <authorList>
            <consortium name="US DOE Joint Genome Institute"/>
            <person name="Siddaramappa S."/>
            <person name="Duncan A.J."/>
            <person name="Challacombe J.F."/>
            <person name="Rainey D."/>
            <person name="Gillaspy A.F."/>
            <person name="Carson M."/>
            <person name="Gipson J."/>
            <person name="Gipson M."/>
            <person name="Bruce D."/>
            <person name="Detter J.C."/>
            <person name="Han C.S."/>
            <person name="Land M."/>
            <person name="Tapia R."/>
            <person name="Thompson L.S."/>
            <person name="Orvis J."/>
            <person name="Zaitshik J."/>
            <person name="Barnes G."/>
            <person name="Brettin T.S."/>
            <person name="Dyer D.W."/>
            <person name="Inzana T.J."/>
        </authorList>
    </citation>
    <scope>NUCLEOTIDE SEQUENCE [LARGE SCALE GENOMIC DNA]</scope>
    <source>
        <strain>2336</strain>
    </source>
</reference>
<gene>
    <name evidence="1" type="primary">psd</name>
    <name type="ordered locus">HSM_0318</name>
</gene>
<organism>
    <name type="scientific">Histophilus somni (strain 2336)</name>
    <name type="common">Haemophilus somnus</name>
    <dbReference type="NCBI Taxonomy" id="228400"/>
    <lineage>
        <taxon>Bacteria</taxon>
        <taxon>Pseudomonadati</taxon>
        <taxon>Pseudomonadota</taxon>
        <taxon>Gammaproteobacteria</taxon>
        <taxon>Pasteurellales</taxon>
        <taxon>Pasteurellaceae</taxon>
        <taxon>Histophilus</taxon>
    </lineage>
</organism>
<name>PSD_HISS2</name>
<dbReference type="EC" id="4.1.1.65" evidence="1"/>
<dbReference type="EMBL" id="CP000947">
    <property type="protein sequence ID" value="ACA31950.1"/>
    <property type="molecule type" value="Genomic_DNA"/>
</dbReference>
<dbReference type="RefSeq" id="WP_012341179.1">
    <property type="nucleotide sequence ID" value="NC_010519.1"/>
</dbReference>
<dbReference type="SMR" id="B0UWL4"/>
<dbReference type="STRING" id="228400.HSM_0318"/>
<dbReference type="GeneID" id="31486598"/>
<dbReference type="KEGG" id="hsm:HSM_0318"/>
<dbReference type="HOGENOM" id="CLU_029061_4_1_6"/>
<dbReference type="UniPathway" id="UPA00558">
    <property type="reaction ID" value="UER00616"/>
</dbReference>
<dbReference type="GO" id="GO:0005886">
    <property type="term" value="C:plasma membrane"/>
    <property type="evidence" value="ECO:0007669"/>
    <property type="project" value="UniProtKB-SubCell"/>
</dbReference>
<dbReference type="GO" id="GO:0004609">
    <property type="term" value="F:phosphatidylserine decarboxylase activity"/>
    <property type="evidence" value="ECO:0007669"/>
    <property type="project" value="UniProtKB-UniRule"/>
</dbReference>
<dbReference type="GO" id="GO:0006646">
    <property type="term" value="P:phosphatidylethanolamine biosynthetic process"/>
    <property type="evidence" value="ECO:0007669"/>
    <property type="project" value="UniProtKB-UniRule"/>
</dbReference>
<dbReference type="HAMAP" id="MF_00662">
    <property type="entry name" value="PS_decarb_PSD_B_type1"/>
    <property type="match status" value="1"/>
</dbReference>
<dbReference type="InterPro" id="IPR003817">
    <property type="entry name" value="PS_Dcarbxylase"/>
</dbReference>
<dbReference type="InterPro" id="IPR033177">
    <property type="entry name" value="PSD-B"/>
</dbReference>
<dbReference type="InterPro" id="IPR033178">
    <property type="entry name" value="PSD_type1_pro"/>
</dbReference>
<dbReference type="NCBIfam" id="TIGR00163">
    <property type="entry name" value="PS_decarb"/>
    <property type="match status" value="1"/>
</dbReference>
<dbReference type="PANTHER" id="PTHR10067">
    <property type="entry name" value="PHOSPHATIDYLSERINE DECARBOXYLASE"/>
    <property type="match status" value="1"/>
</dbReference>
<dbReference type="PANTHER" id="PTHR10067:SF6">
    <property type="entry name" value="PHOSPHATIDYLSERINE DECARBOXYLASE PROENZYME, MITOCHONDRIAL"/>
    <property type="match status" value="1"/>
</dbReference>
<dbReference type="Pfam" id="PF02666">
    <property type="entry name" value="PS_Dcarbxylase"/>
    <property type="match status" value="1"/>
</dbReference>
<proteinExistence type="inferred from homology"/>
<protein>
    <recommendedName>
        <fullName evidence="1">Phosphatidylserine decarboxylase proenzyme</fullName>
        <ecNumber evidence="1">4.1.1.65</ecNumber>
    </recommendedName>
    <component>
        <recommendedName>
            <fullName evidence="1">Phosphatidylserine decarboxylase alpha chain</fullName>
        </recommendedName>
    </component>
    <component>
        <recommendedName>
            <fullName evidence="1">Phosphatidylserine decarboxylase beta chain</fullName>
        </recommendedName>
    </component>
</protein>
<comment type="function">
    <text evidence="1">Catalyzes the formation of phosphatidylethanolamine (PtdEtn) from phosphatidylserine (PtdSer).</text>
</comment>
<comment type="catalytic activity">
    <reaction evidence="1">
        <text>a 1,2-diacyl-sn-glycero-3-phospho-L-serine + H(+) = a 1,2-diacyl-sn-glycero-3-phosphoethanolamine + CO2</text>
        <dbReference type="Rhea" id="RHEA:20828"/>
        <dbReference type="ChEBI" id="CHEBI:15378"/>
        <dbReference type="ChEBI" id="CHEBI:16526"/>
        <dbReference type="ChEBI" id="CHEBI:57262"/>
        <dbReference type="ChEBI" id="CHEBI:64612"/>
        <dbReference type="EC" id="4.1.1.65"/>
    </reaction>
</comment>
<comment type="cofactor">
    <cofactor evidence="1">
        <name>pyruvate</name>
        <dbReference type="ChEBI" id="CHEBI:15361"/>
    </cofactor>
    <text evidence="1">Binds 1 pyruvoyl group covalently per subunit.</text>
</comment>
<comment type="pathway">
    <text evidence="1">Phospholipid metabolism; phosphatidylethanolamine biosynthesis; phosphatidylethanolamine from CDP-diacylglycerol: step 2/2.</text>
</comment>
<comment type="subunit">
    <text evidence="1">Heterodimer of a large membrane-associated beta subunit and a small pyruvoyl-containing alpha subunit.</text>
</comment>
<comment type="subcellular location">
    <subcellularLocation>
        <location evidence="1">Cell membrane</location>
        <topology evidence="1">Peripheral membrane protein</topology>
    </subcellularLocation>
</comment>
<comment type="PTM">
    <text evidence="1">Is synthesized initially as an inactive proenzyme. Formation of the active enzyme involves a self-maturation process in which the active site pyruvoyl group is generated from an internal serine residue via an autocatalytic post-translational modification. Two non-identical subunits are generated from the proenzyme in this reaction, and the pyruvate is formed at the N-terminus of the alpha chain, which is derived from the carboxyl end of the proenzyme. The autoendoproteolytic cleavage occurs by a canonical serine protease mechanism, in which the side chain hydroxyl group of the serine supplies its oxygen atom to form the C-terminus of the beta chain, while the remainder of the serine residue undergoes an oxidative deamination to produce ammonia and the pyruvoyl prosthetic group on the alpha chain. During this reaction, the Ser that is part of the protease active site of the proenzyme becomes the pyruvoyl prosthetic group, which constitutes an essential element of the active site of the mature decarboxylase.</text>
</comment>
<comment type="similarity">
    <text evidence="1">Belongs to the phosphatidylserine decarboxylase family. PSD-B subfamily. Prokaryotic type I sub-subfamily.</text>
</comment>
<accession>B0UWL4</accession>
<sequence>MYNAEKKQPTYWQRLKIAFQYVMPQLYLTLAAGWLAKQKWGSVTHFIIKLFAKKYHVNMQEAEKTEFKDYASFNEFFIRPLKSEARKIDENPTALCLPADGRISQCGHIEQQTLLQAKGHSFSLVDLLAGDTELAKEFEHGEFATIYLSPRDYHRVHMPCDATLRKMIYVPGDLFSVNPFLNEHIPNLLARNERVICVFDTEFGTMVQILVGATITASMSTVWAGIINPPRSTEVKEWTYSDESAVQLRKGQEMGAFQLGSTVINLFQADKVELANHLDVGVPVRVGEVLAYKK</sequence>
<feature type="chain" id="PRO_1000082894" description="Phosphatidylserine decarboxylase beta chain" evidence="1">
    <location>
        <begin position="1"/>
        <end position="260"/>
    </location>
</feature>
<feature type="chain" id="PRO_1000082895" description="Phosphatidylserine decarboxylase alpha chain" evidence="1">
    <location>
        <begin position="261"/>
        <end position="294"/>
    </location>
</feature>
<feature type="active site" description="Charge relay system; for autoendoproteolytic cleavage activity" evidence="1">
    <location>
        <position position="100"/>
    </location>
</feature>
<feature type="active site" description="Charge relay system; for autoendoproteolytic cleavage activity" evidence="1">
    <location>
        <position position="157"/>
    </location>
</feature>
<feature type="active site" description="Charge relay system; for autoendoproteolytic cleavage activity" evidence="1">
    <location>
        <position position="261"/>
    </location>
</feature>
<feature type="active site" description="Schiff-base intermediate with substrate; via pyruvic acid; for decarboxylase activity" evidence="1">
    <location>
        <position position="261"/>
    </location>
</feature>
<feature type="site" description="Cleavage (non-hydrolytic); by autocatalysis" evidence="1">
    <location>
        <begin position="260"/>
        <end position="261"/>
    </location>
</feature>
<feature type="modified residue" description="Pyruvic acid (Ser); by autocatalysis" evidence="1">
    <location>
        <position position="261"/>
    </location>
</feature>
<evidence type="ECO:0000255" key="1">
    <source>
        <dbReference type="HAMAP-Rule" id="MF_00662"/>
    </source>
</evidence>
<keyword id="KW-1003">Cell membrane</keyword>
<keyword id="KW-0210">Decarboxylase</keyword>
<keyword id="KW-0444">Lipid biosynthesis</keyword>
<keyword id="KW-0443">Lipid metabolism</keyword>
<keyword id="KW-0456">Lyase</keyword>
<keyword id="KW-0472">Membrane</keyword>
<keyword id="KW-0594">Phospholipid biosynthesis</keyword>
<keyword id="KW-1208">Phospholipid metabolism</keyword>
<keyword id="KW-0670">Pyruvate</keyword>
<keyword id="KW-0865">Zymogen</keyword>